<feature type="chain" id="PRO_0000266750" description="Small ribosomal subunit protein bS21">
    <location>
        <begin position="1"/>
        <end position="100"/>
    </location>
</feature>
<feature type="region of interest" description="Disordered" evidence="2">
    <location>
        <begin position="61"/>
        <end position="100"/>
    </location>
</feature>
<feature type="compositionally biased region" description="Gly residues" evidence="2">
    <location>
        <begin position="78"/>
        <end position="100"/>
    </location>
</feature>
<evidence type="ECO:0000255" key="1">
    <source>
        <dbReference type="HAMAP-Rule" id="MF_00358"/>
    </source>
</evidence>
<evidence type="ECO:0000256" key="2">
    <source>
        <dbReference type="SAM" id="MobiDB-lite"/>
    </source>
</evidence>
<evidence type="ECO:0000305" key="3"/>
<sequence length="100" mass="11081">MQVLVRDNNVDQALKALKKKMQREGIFREMKLRGHYEKPSEKKAREKAEAVRRARKLARKKLQREGLLPMKPKPVFGAGPGGDRGRGPAAGAGAGPRGPR</sequence>
<reference key="1">
    <citation type="submission" date="2006-03" db="EMBL/GenBank/DDBJ databases">
        <title>Complete sequence of Rhodopseudomonas palustris BisB18.</title>
        <authorList>
            <consortium name="US DOE Joint Genome Institute"/>
            <person name="Copeland A."/>
            <person name="Lucas S."/>
            <person name="Lapidus A."/>
            <person name="Barry K."/>
            <person name="Detter J.C."/>
            <person name="Glavina del Rio T."/>
            <person name="Hammon N."/>
            <person name="Israni S."/>
            <person name="Dalin E."/>
            <person name="Tice H."/>
            <person name="Pitluck S."/>
            <person name="Chain P."/>
            <person name="Malfatti S."/>
            <person name="Shin M."/>
            <person name="Vergez L."/>
            <person name="Schmutz J."/>
            <person name="Larimer F."/>
            <person name="Land M."/>
            <person name="Hauser L."/>
            <person name="Pelletier D.A."/>
            <person name="Kyrpides N."/>
            <person name="Anderson I."/>
            <person name="Oda Y."/>
            <person name="Harwood C.S."/>
            <person name="Richardson P."/>
        </authorList>
    </citation>
    <scope>NUCLEOTIDE SEQUENCE [LARGE SCALE GENOMIC DNA]</scope>
    <source>
        <strain>BisB18</strain>
    </source>
</reference>
<proteinExistence type="inferred from homology"/>
<name>RS21_RHOPB</name>
<dbReference type="EMBL" id="CP000301">
    <property type="protein sequence ID" value="ABD89488.1"/>
    <property type="status" value="ALT_INIT"/>
    <property type="molecule type" value="Genomic_DNA"/>
</dbReference>
<dbReference type="SMR" id="Q20ZE8"/>
<dbReference type="STRING" id="316056.RPC_3962"/>
<dbReference type="KEGG" id="rpc:RPC_3962"/>
<dbReference type="eggNOG" id="COG0828">
    <property type="taxonomic scope" value="Bacteria"/>
</dbReference>
<dbReference type="HOGENOM" id="CLU_159258_0_0_5"/>
<dbReference type="OrthoDB" id="9811907at2"/>
<dbReference type="GO" id="GO:1990904">
    <property type="term" value="C:ribonucleoprotein complex"/>
    <property type="evidence" value="ECO:0007669"/>
    <property type="project" value="UniProtKB-KW"/>
</dbReference>
<dbReference type="GO" id="GO:0005840">
    <property type="term" value="C:ribosome"/>
    <property type="evidence" value="ECO:0007669"/>
    <property type="project" value="UniProtKB-KW"/>
</dbReference>
<dbReference type="GO" id="GO:0003735">
    <property type="term" value="F:structural constituent of ribosome"/>
    <property type="evidence" value="ECO:0007669"/>
    <property type="project" value="InterPro"/>
</dbReference>
<dbReference type="GO" id="GO:0006412">
    <property type="term" value="P:translation"/>
    <property type="evidence" value="ECO:0007669"/>
    <property type="project" value="UniProtKB-UniRule"/>
</dbReference>
<dbReference type="Gene3D" id="1.20.5.1150">
    <property type="entry name" value="Ribosomal protein S8"/>
    <property type="match status" value="1"/>
</dbReference>
<dbReference type="HAMAP" id="MF_00358">
    <property type="entry name" value="Ribosomal_bS21"/>
    <property type="match status" value="1"/>
</dbReference>
<dbReference type="InterPro" id="IPR001911">
    <property type="entry name" value="Ribosomal_bS21"/>
</dbReference>
<dbReference type="InterPro" id="IPR018278">
    <property type="entry name" value="Ribosomal_bS21_CS"/>
</dbReference>
<dbReference type="InterPro" id="IPR038380">
    <property type="entry name" value="Ribosomal_bS21_sf"/>
</dbReference>
<dbReference type="NCBIfam" id="TIGR00030">
    <property type="entry name" value="S21p"/>
    <property type="match status" value="1"/>
</dbReference>
<dbReference type="PANTHER" id="PTHR21109">
    <property type="entry name" value="MITOCHONDRIAL 28S RIBOSOMAL PROTEIN S21"/>
    <property type="match status" value="1"/>
</dbReference>
<dbReference type="PANTHER" id="PTHR21109:SF0">
    <property type="entry name" value="SMALL RIBOSOMAL SUBUNIT PROTEIN BS21M"/>
    <property type="match status" value="1"/>
</dbReference>
<dbReference type="Pfam" id="PF01165">
    <property type="entry name" value="Ribosomal_S21"/>
    <property type="match status" value="1"/>
</dbReference>
<dbReference type="PROSITE" id="PS01181">
    <property type="entry name" value="RIBOSOMAL_S21"/>
    <property type="match status" value="1"/>
</dbReference>
<protein>
    <recommendedName>
        <fullName evidence="1">Small ribosomal subunit protein bS21</fullName>
    </recommendedName>
    <alternativeName>
        <fullName evidence="3">30S ribosomal protein S21</fullName>
    </alternativeName>
</protein>
<organism>
    <name type="scientific">Rhodopseudomonas palustris (strain BisB18)</name>
    <dbReference type="NCBI Taxonomy" id="316056"/>
    <lineage>
        <taxon>Bacteria</taxon>
        <taxon>Pseudomonadati</taxon>
        <taxon>Pseudomonadota</taxon>
        <taxon>Alphaproteobacteria</taxon>
        <taxon>Hyphomicrobiales</taxon>
        <taxon>Nitrobacteraceae</taxon>
        <taxon>Rhodopseudomonas</taxon>
    </lineage>
</organism>
<comment type="similarity">
    <text evidence="1">Belongs to the bacterial ribosomal protein bS21 family.</text>
</comment>
<comment type="sequence caution" evidence="3">
    <conflict type="erroneous initiation">
        <sequence resource="EMBL-CDS" id="ABD89488"/>
    </conflict>
</comment>
<accession>Q20ZE8</accession>
<keyword id="KW-0687">Ribonucleoprotein</keyword>
<keyword id="KW-0689">Ribosomal protein</keyword>
<gene>
    <name evidence="1" type="primary">rpsU</name>
    <name type="ordered locus">RPC_3962</name>
</gene>